<feature type="signal peptide" evidence="1">
    <location>
        <begin position="1"/>
        <end position="26"/>
    </location>
</feature>
<feature type="chain" id="PRO_0000390675" description="UPF0603 protein Rv2345">
    <location>
        <begin position="27"/>
        <end position="660"/>
    </location>
</feature>
<feature type="transmembrane region" description="Helical" evidence="1">
    <location>
        <begin position="162"/>
        <end position="182"/>
    </location>
</feature>
<feature type="transmembrane region" description="Helical" evidence="1">
    <location>
        <begin position="605"/>
        <end position="625"/>
    </location>
</feature>
<feature type="region of interest" description="Disordered" evidence="2">
    <location>
        <begin position="638"/>
        <end position="660"/>
    </location>
</feature>
<feature type="coiled-coil region" evidence="1">
    <location>
        <begin position="488"/>
        <end position="567"/>
    </location>
</feature>
<protein>
    <recommendedName>
        <fullName>UPF0603 protein Rv2345</fullName>
    </recommendedName>
</protein>
<comment type="function">
    <text evidence="4">May play a role in septum formation.</text>
</comment>
<comment type="subcellular location">
    <subcellularLocation>
        <location evidence="5">Cell membrane</location>
        <topology evidence="5">Multi-pass membrane protein</topology>
    </subcellularLocation>
</comment>
<comment type="induction">
    <text evidence="4">Induced by albendazole and thiabendazole, which inhibit the GTPase activity of FtsZ and probably septum formation.</text>
</comment>
<comment type="disruption phenotype">
    <text evidence="3">Not essential for growth.</text>
</comment>
<comment type="similarity">
    <text evidence="5">Belongs to the UPF0603 family.</text>
</comment>
<dbReference type="EMBL" id="AL123456">
    <property type="protein sequence ID" value="CCP45133.1"/>
    <property type="molecule type" value="Genomic_DNA"/>
</dbReference>
<dbReference type="PIR" id="B70662">
    <property type="entry name" value="B70662"/>
</dbReference>
<dbReference type="RefSeq" id="NP_216861.1">
    <property type="nucleotide sequence ID" value="NC_000962.3"/>
</dbReference>
<dbReference type="RefSeq" id="WP_003899282.1">
    <property type="nucleotide sequence ID" value="NZ_NVQJ01000012.1"/>
</dbReference>
<dbReference type="SMR" id="P9WFJ5"/>
<dbReference type="STRING" id="83332.Rv2345"/>
<dbReference type="PaxDb" id="83332-Rv2345"/>
<dbReference type="DNASU" id="888960"/>
<dbReference type="GeneID" id="888960"/>
<dbReference type="KEGG" id="mtu:Rv2345"/>
<dbReference type="KEGG" id="mtv:RVBD_2345"/>
<dbReference type="TubercuList" id="Rv2345"/>
<dbReference type="eggNOG" id="COG1512">
    <property type="taxonomic scope" value="Bacteria"/>
</dbReference>
<dbReference type="InParanoid" id="P9WFJ5"/>
<dbReference type="OrthoDB" id="5105562at2"/>
<dbReference type="Proteomes" id="UP000001584">
    <property type="component" value="Chromosome"/>
</dbReference>
<dbReference type="GO" id="GO:0009274">
    <property type="term" value="C:peptidoglycan-based cell wall"/>
    <property type="evidence" value="ECO:0007005"/>
    <property type="project" value="MTBBASE"/>
</dbReference>
<dbReference type="GO" id="GO:0005886">
    <property type="term" value="C:plasma membrane"/>
    <property type="evidence" value="ECO:0007005"/>
    <property type="project" value="MTBBASE"/>
</dbReference>
<dbReference type="FunFam" id="3.10.310.50:FF:000004">
    <property type="entry name" value="POSSIBLE CONSERVED TRANSMEMBRANE PROTEIN"/>
    <property type="match status" value="1"/>
</dbReference>
<dbReference type="Gene3D" id="3.10.310.50">
    <property type="match status" value="1"/>
</dbReference>
<dbReference type="InterPro" id="IPR007621">
    <property type="entry name" value="TPM_dom"/>
</dbReference>
<dbReference type="Pfam" id="PF04536">
    <property type="entry name" value="TPM_phosphatase"/>
    <property type="match status" value="1"/>
</dbReference>
<proteinExistence type="evidence at protein level"/>
<reference key="1">
    <citation type="journal article" date="1998" name="Nature">
        <title>Deciphering the biology of Mycobacterium tuberculosis from the complete genome sequence.</title>
        <authorList>
            <person name="Cole S.T."/>
            <person name="Brosch R."/>
            <person name="Parkhill J."/>
            <person name="Garnier T."/>
            <person name="Churcher C.M."/>
            <person name="Harris D.E."/>
            <person name="Gordon S.V."/>
            <person name="Eiglmeier K."/>
            <person name="Gas S."/>
            <person name="Barry C.E. III"/>
            <person name="Tekaia F."/>
            <person name="Badcock K."/>
            <person name="Basham D."/>
            <person name="Brown D."/>
            <person name="Chillingworth T."/>
            <person name="Connor R."/>
            <person name="Davies R.M."/>
            <person name="Devlin K."/>
            <person name="Feltwell T."/>
            <person name="Gentles S."/>
            <person name="Hamlin N."/>
            <person name="Holroyd S."/>
            <person name="Hornsby T."/>
            <person name="Jagels K."/>
            <person name="Krogh A."/>
            <person name="McLean J."/>
            <person name="Moule S."/>
            <person name="Murphy L.D."/>
            <person name="Oliver S."/>
            <person name="Osborne J."/>
            <person name="Quail M.A."/>
            <person name="Rajandream M.A."/>
            <person name="Rogers J."/>
            <person name="Rutter S."/>
            <person name="Seeger K."/>
            <person name="Skelton S."/>
            <person name="Squares S."/>
            <person name="Squares R."/>
            <person name="Sulston J.E."/>
            <person name="Taylor K."/>
            <person name="Whitehead S."/>
            <person name="Barrell B.G."/>
        </authorList>
    </citation>
    <scope>NUCLEOTIDE SEQUENCE [LARGE SCALE GENOMIC DNA]</scope>
    <source>
        <strain>ATCC 25618 / H37Rv</strain>
    </source>
</reference>
<reference key="2">
    <citation type="journal article" date="2003" name="Mol. Microbiol.">
        <title>Genes required for mycobacterial growth defined by high density mutagenesis.</title>
        <authorList>
            <person name="Sassetti C.M."/>
            <person name="Boyd D.H."/>
            <person name="Rubin E.J."/>
        </authorList>
    </citation>
    <scope>DISRUPTION PHENOTYPE</scope>
    <source>
        <strain>ATCC 25618 / H37Rv</strain>
    </source>
</reference>
<reference key="3">
    <citation type="journal article" date="2006" name="Microbiology">
        <title>Identification of cell cycle regulators in Mycobacterium tuberculosis by inhibition of septum formation and global transcriptional analysis.</title>
        <authorList>
            <person name="Slayden R.A."/>
            <person name="Knudson D.L."/>
            <person name="Belisle J.T."/>
        </authorList>
    </citation>
    <scope>INDUCTION</scope>
    <scope>FUNCTION</scope>
    <source>
        <strain>ATCC 25618 / H37Rv</strain>
    </source>
</reference>
<reference key="4">
    <citation type="journal article" date="2011" name="Mol. Cell. Proteomics">
        <title>Proteogenomic analysis of Mycobacterium tuberculosis by high resolution mass spectrometry.</title>
        <authorList>
            <person name="Kelkar D.S."/>
            <person name="Kumar D."/>
            <person name="Kumar P."/>
            <person name="Balakrishnan L."/>
            <person name="Muthusamy B."/>
            <person name="Yadav A.K."/>
            <person name="Shrivastava P."/>
            <person name="Marimuthu A."/>
            <person name="Anand S."/>
            <person name="Sundaram H."/>
            <person name="Kingsbury R."/>
            <person name="Harsha H.C."/>
            <person name="Nair B."/>
            <person name="Prasad T.S."/>
            <person name="Chauhan D.S."/>
            <person name="Katoch K."/>
            <person name="Katoch V.M."/>
            <person name="Kumar P."/>
            <person name="Chaerkady R."/>
            <person name="Ramachandran S."/>
            <person name="Dash D."/>
            <person name="Pandey A."/>
        </authorList>
    </citation>
    <scope>IDENTIFICATION BY MASS SPECTROMETRY [LARGE SCALE ANALYSIS]</scope>
    <source>
        <strain>ATCC 25618 / H37Rv</strain>
    </source>
</reference>
<accession>P9WFJ5</accession>
<accession>L0TAY3</accession>
<accession>P95241</accession>
<accession>Q7D7A4</accession>
<name>Y2345_MYCTU</name>
<gene>
    <name type="ordered locus">Rv2345</name>
</gene>
<keyword id="KW-1003">Cell membrane</keyword>
<keyword id="KW-0175">Coiled coil</keyword>
<keyword id="KW-0472">Membrane</keyword>
<keyword id="KW-1185">Reference proteome</keyword>
<keyword id="KW-0732">Signal</keyword>
<keyword id="KW-0812">Transmembrane</keyword>
<keyword id="KW-1133">Transmembrane helix</keyword>
<organism>
    <name type="scientific">Mycobacterium tuberculosis (strain ATCC 25618 / H37Rv)</name>
    <dbReference type="NCBI Taxonomy" id="83332"/>
    <lineage>
        <taxon>Bacteria</taxon>
        <taxon>Bacillati</taxon>
        <taxon>Actinomycetota</taxon>
        <taxon>Actinomycetes</taxon>
        <taxon>Mycobacteriales</taxon>
        <taxon>Mycobacteriaceae</taxon>
        <taxon>Mycobacterium</taxon>
        <taxon>Mycobacterium tuberculosis complex</taxon>
    </lineage>
</organism>
<sequence length="660" mass="70030">MRLVRLLGMVLTILAAGLLLGPPAGAQPPFRLSNYVTDNAGVLTSSGRTAVTAAVDRLYADRRIRLWVVYVENFSGQSALNWAQRTTRTSELGNYDALLAVATTGREYAFLVPSAMPGVSEGQVDNVRRYQIEPALHDGDYSGAAVAAANGLNRSPSSSSRVVLLVTVGIIVIVVAVLLVVMRHRNRRRRADELAAARRVDPTNVMALAAVPLQALDDLSRSMVVDVDNAVRTSTNELALAIEEFGERRTAPFTQAVNNAKAALSQAFTVRQQLDDNTPETPAQRRELLTRVIVSAAHADRELASQTEAFEKLRDLVINAPARLDLLTQQYVELTTRIGPTQQRLAELHTEFDAAAMTSIAGNVTTATERLAFADRNISAARDLADQAVSGRQAGLVDAVRAAESALGQARALLDAVDSAATDIRHAVASLPAVVADIQTGIKRANQHLQQAQQPQTGRTGDLIAARDAAARALDRARGAADPLTAFDQLTKVDADLDRLLATLAEEQATADRLNRSLEQALFTAESRVRAVSEYIDTRRGSIGPEARTRLAEAKRQLEAAHDRKSSNPTEAIAYANAASTLAAHAQSLANADVQSAQRAYTRRGGNNAGAILGGIIIGDLLSGGTRGGLGGWIPTSFGGSSNAPGSSPDGGFLGGGGRF</sequence>
<evidence type="ECO:0000255" key="1"/>
<evidence type="ECO:0000256" key="2">
    <source>
        <dbReference type="SAM" id="MobiDB-lite"/>
    </source>
</evidence>
<evidence type="ECO:0000269" key="3">
    <source>
    </source>
</evidence>
<evidence type="ECO:0000269" key="4">
    <source>
    </source>
</evidence>
<evidence type="ECO:0000305" key="5"/>